<feature type="signal peptide" evidence="1">
    <location>
        <begin position="1"/>
        <end position="30"/>
    </location>
</feature>
<feature type="chain" id="PRO_0000296144" description="Putative cysteine-rich repeat secretory protein 16">
    <location>
        <begin position="31"/>
        <end position="258"/>
    </location>
</feature>
<feature type="domain" description="Gnk2-homologous 1" evidence="2">
    <location>
        <begin position="37"/>
        <end position="139"/>
    </location>
</feature>
<feature type="domain" description="Gnk2-homologous 2" evidence="2">
    <location>
        <begin position="144"/>
        <end position="247"/>
    </location>
</feature>
<name>CRR16_ARATH</name>
<reference key="1">
    <citation type="journal article" date="2000" name="DNA Res.">
        <title>Structural analysis of Arabidopsis thaliana chromosome 3. I. Sequence features of the regions of 4,504,864 bp covered by sixty P1 and TAC clones.</title>
        <authorList>
            <person name="Sato S."/>
            <person name="Nakamura Y."/>
            <person name="Kaneko T."/>
            <person name="Katoh T."/>
            <person name="Asamizu E."/>
            <person name="Tabata S."/>
        </authorList>
    </citation>
    <scope>NUCLEOTIDE SEQUENCE [LARGE SCALE GENOMIC DNA]</scope>
    <source>
        <strain>cv. Columbia</strain>
    </source>
</reference>
<reference key="2">
    <citation type="journal article" date="2017" name="Plant J.">
        <title>Araport11: a complete reannotation of the Arabidopsis thaliana reference genome.</title>
        <authorList>
            <person name="Cheng C.Y."/>
            <person name="Krishnakumar V."/>
            <person name="Chan A.P."/>
            <person name="Thibaud-Nissen F."/>
            <person name="Schobel S."/>
            <person name="Town C.D."/>
        </authorList>
    </citation>
    <scope>GENOME REANNOTATION</scope>
    <source>
        <strain>cv. Columbia</strain>
    </source>
</reference>
<reference key="3">
    <citation type="journal article" date="2001" name="Plant Physiol.">
        <title>A superfamily of proteins with novel cysteine-rich repeats.</title>
        <authorList>
            <person name="Chen Z."/>
        </authorList>
    </citation>
    <scope>GENE FAMILY ORGANIZATION</scope>
    <scope>NOMENCLATURE</scope>
</reference>
<keyword id="KW-1185">Reference proteome</keyword>
<keyword id="KW-0677">Repeat</keyword>
<keyword id="KW-0964">Secreted</keyword>
<keyword id="KW-0732">Signal</keyword>
<sequence length="258" mass="29110">MYYSSPTCFVLITIFAVVVTQLIFMRTVSSLNMTNAYLNHKCLANQGKYKPGSWYEKKLQSIIVSIGSGDGFTLGYDMMALGKDSDYVAVTNQCRGDSNGSMCRSCFATAIARVTRCPRYKGAIIWYDQCTLQISPFDTQGKFDKDNDFCMSNKKKMNVDSFGEKWMTFLDNLVGIALKDHLYAAGDTRFGTKKLYGMVQCRLDIYNNSCRECVGHIAVKFQDCWHGKQGARVLGSGCNFRYELYPFVGSNKRGRNLN</sequence>
<organism>
    <name type="scientific">Arabidopsis thaliana</name>
    <name type="common">Mouse-ear cress</name>
    <dbReference type="NCBI Taxonomy" id="3702"/>
    <lineage>
        <taxon>Eukaryota</taxon>
        <taxon>Viridiplantae</taxon>
        <taxon>Streptophyta</taxon>
        <taxon>Embryophyta</taxon>
        <taxon>Tracheophyta</taxon>
        <taxon>Spermatophyta</taxon>
        <taxon>Magnoliopsida</taxon>
        <taxon>eudicotyledons</taxon>
        <taxon>Gunneridae</taxon>
        <taxon>Pentapetalae</taxon>
        <taxon>rosids</taxon>
        <taxon>malvids</taxon>
        <taxon>Brassicales</taxon>
        <taxon>Brassicaceae</taxon>
        <taxon>Camelineae</taxon>
        <taxon>Arabidopsis</taxon>
    </lineage>
</organism>
<protein>
    <recommendedName>
        <fullName>Putative cysteine-rich repeat secretory protein 16</fullName>
    </recommendedName>
</protein>
<comment type="subcellular location">
    <subcellularLocation>
        <location evidence="3">Secreted</location>
    </subcellularLocation>
</comment>
<comment type="similarity">
    <text evidence="3">Belongs to the cysteine-rich repeat secretory protein family.</text>
</comment>
<comment type="sequence caution" evidence="3">
    <conflict type="erroneous gene model prediction">
        <sequence resource="EMBL-CDS" id="AEE76564"/>
    </conflict>
</comment>
<comment type="sequence caution" evidence="3">
    <conflict type="erroneous gene model prediction">
        <sequence resource="EMBL-CDS" id="BAB01367"/>
    </conflict>
</comment>
<accession>Q9LRM3</accession>
<accession>F4IYW2</accession>
<dbReference type="EMBL" id="AB028622">
    <property type="protein sequence ID" value="BAB01367.1"/>
    <property type="status" value="ALT_SEQ"/>
    <property type="molecule type" value="Genomic_DNA"/>
</dbReference>
<dbReference type="EMBL" id="CP002686">
    <property type="protein sequence ID" value="AEE76564.1"/>
    <property type="status" value="ALT_SEQ"/>
    <property type="molecule type" value="Genomic_DNA"/>
</dbReference>
<dbReference type="EMBL" id="CP002686">
    <property type="protein sequence ID" value="ANM64086.1"/>
    <property type="molecule type" value="Genomic_DNA"/>
</dbReference>
<dbReference type="RefSeq" id="NP_001326136.1">
    <property type="nucleotide sequence ID" value="NM_001338554.1"/>
</dbReference>
<dbReference type="RefSeq" id="NP_188828.1">
    <property type="nucleotide sequence ID" value="NM_113086.2"/>
</dbReference>
<dbReference type="SMR" id="Q9LRM3"/>
<dbReference type="PaxDb" id="3702-AT3G21900.1"/>
<dbReference type="EnsemblPlants" id="AT3G21900.2">
    <property type="protein sequence ID" value="AT3G21900.2"/>
    <property type="gene ID" value="AT3G21900"/>
</dbReference>
<dbReference type="GeneID" id="821745"/>
<dbReference type="Gramene" id="AT3G21900.2">
    <property type="protein sequence ID" value="AT3G21900.2"/>
    <property type="gene ID" value="AT3G21900"/>
</dbReference>
<dbReference type="KEGG" id="ath:AT3G21900"/>
<dbReference type="Araport" id="AT3G21900"/>
<dbReference type="TAIR" id="AT3G21900"/>
<dbReference type="eggNOG" id="ENOG502QPWH">
    <property type="taxonomic scope" value="Eukaryota"/>
</dbReference>
<dbReference type="HOGENOM" id="CLU_000288_35_0_1"/>
<dbReference type="InParanoid" id="Q9LRM3"/>
<dbReference type="OMA" id="DYNNNLC"/>
<dbReference type="PRO" id="PR:Q9LRM3"/>
<dbReference type="Proteomes" id="UP000006548">
    <property type="component" value="Chromosome 3"/>
</dbReference>
<dbReference type="ExpressionAtlas" id="Q9LRM3">
    <property type="expression patterns" value="baseline"/>
</dbReference>
<dbReference type="GO" id="GO:0005576">
    <property type="term" value="C:extracellular region"/>
    <property type="evidence" value="ECO:0007669"/>
    <property type="project" value="UniProtKB-SubCell"/>
</dbReference>
<dbReference type="CDD" id="cd23509">
    <property type="entry name" value="Gnk2-like"/>
    <property type="match status" value="2"/>
</dbReference>
<dbReference type="Gene3D" id="3.30.430.20">
    <property type="entry name" value="Gnk2 domain, C-X8-C-X2-C motif"/>
    <property type="match status" value="2"/>
</dbReference>
<dbReference type="InterPro" id="IPR050581">
    <property type="entry name" value="CRR_secretory_protein"/>
</dbReference>
<dbReference type="InterPro" id="IPR002902">
    <property type="entry name" value="GNK2"/>
</dbReference>
<dbReference type="InterPro" id="IPR038408">
    <property type="entry name" value="GNK2_sf"/>
</dbReference>
<dbReference type="PANTHER" id="PTHR32411:SF53">
    <property type="entry name" value="CYSTEINE-RICH REPEAT SECRETORY PROTEIN 18-RELATED"/>
    <property type="match status" value="1"/>
</dbReference>
<dbReference type="PANTHER" id="PTHR32411">
    <property type="entry name" value="CYSTEINE-RICH REPEAT SECRETORY PROTEIN 38-RELATED"/>
    <property type="match status" value="1"/>
</dbReference>
<dbReference type="Pfam" id="PF01657">
    <property type="entry name" value="Stress-antifung"/>
    <property type="match status" value="2"/>
</dbReference>
<dbReference type="PROSITE" id="PS51473">
    <property type="entry name" value="GNK2"/>
    <property type="match status" value="2"/>
</dbReference>
<proteinExistence type="inferred from homology"/>
<gene>
    <name type="primary">CRRSP16</name>
    <name type="ordered locus">At3g21900</name>
    <name type="ORF">MZN24.2</name>
</gene>
<evidence type="ECO:0000255" key="1"/>
<evidence type="ECO:0000255" key="2">
    <source>
        <dbReference type="PROSITE-ProRule" id="PRU00806"/>
    </source>
</evidence>
<evidence type="ECO:0000305" key="3"/>